<dbReference type="EMBL" id="AC015447">
    <property type="protein sequence ID" value="AAF87895.1"/>
    <property type="molecule type" value="Genomic_DNA"/>
</dbReference>
<dbReference type="EMBL" id="CP002684">
    <property type="protein sequence ID" value="AEE30100.1"/>
    <property type="molecule type" value="Genomic_DNA"/>
</dbReference>
<dbReference type="EMBL" id="CP002684">
    <property type="protein sequence ID" value="ANM58718.1"/>
    <property type="molecule type" value="Genomic_DNA"/>
</dbReference>
<dbReference type="EMBL" id="AY058081">
    <property type="protein sequence ID" value="AAL24189.1"/>
    <property type="molecule type" value="mRNA"/>
</dbReference>
<dbReference type="EMBL" id="AY090308">
    <property type="protein sequence ID" value="AAL90969.1"/>
    <property type="molecule type" value="mRNA"/>
</dbReference>
<dbReference type="EMBL" id="AY085898">
    <property type="protein sequence ID" value="AAM63110.1"/>
    <property type="molecule type" value="mRNA"/>
</dbReference>
<dbReference type="PIR" id="B86347">
    <property type="entry name" value="B86347"/>
</dbReference>
<dbReference type="RefSeq" id="NP_001321134.1">
    <property type="nucleotide sequence ID" value="NM_001332504.1"/>
</dbReference>
<dbReference type="RefSeq" id="NP_564139.1">
    <property type="nucleotide sequence ID" value="NM_101993.4"/>
</dbReference>
<dbReference type="SMR" id="Q9LPL4"/>
<dbReference type="BioGRID" id="23979">
    <property type="interactions" value="9"/>
</dbReference>
<dbReference type="FunCoup" id="Q9LPL4">
    <property type="interactions" value="508"/>
</dbReference>
<dbReference type="IntAct" id="Q9LPL4">
    <property type="interactions" value="1"/>
</dbReference>
<dbReference type="STRING" id="3702.Q9LPL4"/>
<dbReference type="PaxDb" id="3702-AT1G21410.1"/>
<dbReference type="EnsemblPlants" id="AT1G21410.1">
    <property type="protein sequence ID" value="AT1G21410.1"/>
    <property type="gene ID" value="AT1G21410"/>
</dbReference>
<dbReference type="EnsemblPlants" id="AT1G21410.2">
    <property type="protein sequence ID" value="AT1G21410.2"/>
    <property type="gene ID" value="AT1G21410"/>
</dbReference>
<dbReference type="GeneID" id="838740"/>
<dbReference type="Gramene" id="AT1G21410.1">
    <property type="protein sequence ID" value="AT1G21410.1"/>
    <property type="gene ID" value="AT1G21410"/>
</dbReference>
<dbReference type="Gramene" id="AT1G21410.2">
    <property type="protein sequence ID" value="AT1G21410.2"/>
    <property type="gene ID" value="AT1G21410"/>
</dbReference>
<dbReference type="KEGG" id="ath:AT1G21410"/>
<dbReference type="Araport" id="AT1G21410"/>
<dbReference type="TAIR" id="AT1G21410">
    <property type="gene designation" value="SKP2A"/>
</dbReference>
<dbReference type="eggNOG" id="KOG1947">
    <property type="taxonomic scope" value="Eukaryota"/>
</dbReference>
<dbReference type="HOGENOM" id="CLU_032606_0_0_1"/>
<dbReference type="InParanoid" id="Q9LPL4"/>
<dbReference type="OMA" id="KHEMWAS"/>
<dbReference type="OrthoDB" id="423607at2759"/>
<dbReference type="PhylomeDB" id="Q9LPL4"/>
<dbReference type="UniPathway" id="UPA00143"/>
<dbReference type="PRO" id="PR:Q9LPL4"/>
<dbReference type="Proteomes" id="UP000006548">
    <property type="component" value="Chromosome 1"/>
</dbReference>
<dbReference type="ExpressionAtlas" id="Q9LPL4">
    <property type="expression patterns" value="baseline and differential"/>
</dbReference>
<dbReference type="GO" id="GO:0005634">
    <property type="term" value="C:nucleus"/>
    <property type="evidence" value="ECO:0000314"/>
    <property type="project" value="UniProtKB"/>
</dbReference>
<dbReference type="GO" id="GO:0019005">
    <property type="term" value="C:SCF ubiquitin ligase complex"/>
    <property type="evidence" value="ECO:0000314"/>
    <property type="project" value="UniProtKB"/>
</dbReference>
<dbReference type="GO" id="GO:0004842">
    <property type="term" value="F:ubiquitin-protein transferase activity"/>
    <property type="evidence" value="ECO:0000314"/>
    <property type="project" value="UniProtKB"/>
</dbReference>
<dbReference type="GO" id="GO:0009734">
    <property type="term" value="P:auxin-activated signaling pathway"/>
    <property type="evidence" value="ECO:0007669"/>
    <property type="project" value="UniProtKB-KW"/>
</dbReference>
<dbReference type="GO" id="GO:0071365">
    <property type="term" value="P:cellular response to auxin stimulus"/>
    <property type="evidence" value="ECO:0000314"/>
    <property type="project" value="UniProtKB"/>
</dbReference>
<dbReference type="GO" id="GO:0010311">
    <property type="term" value="P:lateral root formation"/>
    <property type="evidence" value="ECO:0000315"/>
    <property type="project" value="UniProtKB"/>
</dbReference>
<dbReference type="GO" id="GO:0051781">
    <property type="term" value="P:positive regulation of cell division"/>
    <property type="evidence" value="ECO:0000315"/>
    <property type="project" value="TAIR"/>
</dbReference>
<dbReference type="GO" id="GO:0016567">
    <property type="term" value="P:protein ubiquitination"/>
    <property type="evidence" value="ECO:0000314"/>
    <property type="project" value="UniProtKB"/>
</dbReference>
<dbReference type="GO" id="GO:0031146">
    <property type="term" value="P:SCF-dependent proteasomal ubiquitin-dependent protein catabolic process"/>
    <property type="evidence" value="ECO:0000314"/>
    <property type="project" value="UniProtKB"/>
</dbReference>
<dbReference type="CDD" id="cd22161">
    <property type="entry name" value="F-box_AtSKP2-like"/>
    <property type="match status" value="1"/>
</dbReference>
<dbReference type="FunFam" id="3.80.10.10:FF:000188">
    <property type="entry name" value="F-box protein SKP2B"/>
    <property type="match status" value="1"/>
</dbReference>
<dbReference type="Gene3D" id="1.20.1280.50">
    <property type="match status" value="1"/>
</dbReference>
<dbReference type="Gene3D" id="3.80.10.10">
    <property type="entry name" value="Ribonuclease Inhibitor"/>
    <property type="match status" value="1"/>
</dbReference>
<dbReference type="InterPro" id="IPR036047">
    <property type="entry name" value="F-box-like_dom_sf"/>
</dbReference>
<dbReference type="InterPro" id="IPR001810">
    <property type="entry name" value="F-box_dom"/>
</dbReference>
<dbReference type="InterPro" id="IPR001611">
    <property type="entry name" value="Leu-rich_rpt"/>
</dbReference>
<dbReference type="InterPro" id="IPR006553">
    <property type="entry name" value="Leu-rich_rpt_Cys-con_subtyp"/>
</dbReference>
<dbReference type="InterPro" id="IPR032675">
    <property type="entry name" value="LRR_dom_sf"/>
</dbReference>
<dbReference type="PANTHER" id="PTHR13318:SF258">
    <property type="entry name" value="F-BOX PROTEIN SKP2A"/>
    <property type="match status" value="1"/>
</dbReference>
<dbReference type="PANTHER" id="PTHR13318">
    <property type="entry name" value="PARTNER OF PAIRED, ISOFORM B-RELATED"/>
    <property type="match status" value="1"/>
</dbReference>
<dbReference type="Pfam" id="PF12937">
    <property type="entry name" value="F-box-like"/>
    <property type="match status" value="1"/>
</dbReference>
<dbReference type="Pfam" id="PF13516">
    <property type="entry name" value="LRR_6"/>
    <property type="match status" value="3"/>
</dbReference>
<dbReference type="SMART" id="SM00367">
    <property type="entry name" value="LRR_CC"/>
    <property type="match status" value="8"/>
</dbReference>
<dbReference type="SUPFAM" id="SSF81383">
    <property type="entry name" value="F-box domain"/>
    <property type="match status" value="1"/>
</dbReference>
<dbReference type="SUPFAM" id="SSF52047">
    <property type="entry name" value="RNI-like"/>
    <property type="match status" value="1"/>
</dbReference>
<protein>
    <recommendedName>
        <fullName>F-box protein SKP2A</fullName>
    </recommendedName>
    <alternativeName>
        <fullName>FBL5-like protein</fullName>
        <shortName>AtFBL5</shortName>
    </alternativeName>
    <alternativeName>
        <fullName>SKP2-like protein 1</fullName>
        <shortName>AtSKP2;1</shortName>
    </alternativeName>
</protein>
<reference key="1">
    <citation type="journal article" date="2000" name="Nature">
        <title>Sequence and analysis of chromosome 1 of the plant Arabidopsis thaliana.</title>
        <authorList>
            <person name="Theologis A."/>
            <person name="Ecker J.R."/>
            <person name="Palm C.J."/>
            <person name="Federspiel N.A."/>
            <person name="Kaul S."/>
            <person name="White O."/>
            <person name="Alonso J."/>
            <person name="Altafi H."/>
            <person name="Araujo R."/>
            <person name="Bowman C.L."/>
            <person name="Brooks S.Y."/>
            <person name="Buehler E."/>
            <person name="Chan A."/>
            <person name="Chao Q."/>
            <person name="Chen H."/>
            <person name="Cheuk R.F."/>
            <person name="Chin C.W."/>
            <person name="Chung M.K."/>
            <person name="Conn L."/>
            <person name="Conway A.B."/>
            <person name="Conway A.R."/>
            <person name="Creasy T.H."/>
            <person name="Dewar K."/>
            <person name="Dunn P."/>
            <person name="Etgu P."/>
            <person name="Feldblyum T.V."/>
            <person name="Feng J.-D."/>
            <person name="Fong B."/>
            <person name="Fujii C.Y."/>
            <person name="Gill J.E."/>
            <person name="Goldsmith A.D."/>
            <person name="Haas B."/>
            <person name="Hansen N.F."/>
            <person name="Hughes B."/>
            <person name="Huizar L."/>
            <person name="Hunter J.L."/>
            <person name="Jenkins J."/>
            <person name="Johnson-Hopson C."/>
            <person name="Khan S."/>
            <person name="Khaykin E."/>
            <person name="Kim C.J."/>
            <person name="Koo H.L."/>
            <person name="Kremenetskaia I."/>
            <person name="Kurtz D.B."/>
            <person name="Kwan A."/>
            <person name="Lam B."/>
            <person name="Langin-Hooper S."/>
            <person name="Lee A."/>
            <person name="Lee J.M."/>
            <person name="Lenz C.A."/>
            <person name="Li J.H."/>
            <person name="Li Y.-P."/>
            <person name="Lin X."/>
            <person name="Liu S.X."/>
            <person name="Liu Z.A."/>
            <person name="Luros J.S."/>
            <person name="Maiti R."/>
            <person name="Marziali A."/>
            <person name="Militscher J."/>
            <person name="Miranda M."/>
            <person name="Nguyen M."/>
            <person name="Nierman W.C."/>
            <person name="Osborne B.I."/>
            <person name="Pai G."/>
            <person name="Peterson J."/>
            <person name="Pham P.K."/>
            <person name="Rizzo M."/>
            <person name="Rooney T."/>
            <person name="Rowley D."/>
            <person name="Sakano H."/>
            <person name="Salzberg S.L."/>
            <person name="Schwartz J.R."/>
            <person name="Shinn P."/>
            <person name="Southwick A.M."/>
            <person name="Sun H."/>
            <person name="Tallon L.J."/>
            <person name="Tambunga G."/>
            <person name="Toriumi M.J."/>
            <person name="Town C.D."/>
            <person name="Utterback T."/>
            <person name="Van Aken S."/>
            <person name="Vaysberg M."/>
            <person name="Vysotskaia V.S."/>
            <person name="Walker M."/>
            <person name="Wu D."/>
            <person name="Yu G."/>
            <person name="Fraser C.M."/>
            <person name="Venter J.C."/>
            <person name="Davis R.W."/>
        </authorList>
    </citation>
    <scope>NUCLEOTIDE SEQUENCE [LARGE SCALE GENOMIC DNA]</scope>
    <source>
        <strain>cv. Columbia</strain>
    </source>
</reference>
<reference key="2">
    <citation type="journal article" date="2017" name="Plant J.">
        <title>Araport11: a complete reannotation of the Arabidopsis thaliana reference genome.</title>
        <authorList>
            <person name="Cheng C.Y."/>
            <person name="Krishnakumar V."/>
            <person name="Chan A.P."/>
            <person name="Thibaud-Nissen F."/>
            <person name="Schobel S."/>
            <person name="Town C.D."/>
        </authorList>
    </citation>
    <scope>GENOME REANNOTATION</scope>
    <source>
        <strain>cv. Columbia</strain>
    </source>
</reference>
<reference key="3">
    <citation type="journal article" date="2003" name="Science">
        <title>Empirical analysis of transcriptional activity in the Arabidopsis genome.</title>
        <authorList>
            <person name="Yamada K."/>
            <person name="Lim J."/>
            <person name="Dale J.M."/>
            <person name="Chen H."/>
            <person name="Shinn P."/>
            <person name="Palm C.J."/>
            <person name="Southwick A.M."/>
            <person name="Wu H.C."/>
            <person name="Kim C.J."/>
            <person name="Nguyen M."/>
            <person name="Pham P.K."/>
            <person name="Cheuk R.F."/>
            <person name="Karlin-Newmann G."/>
            <person name="Liu S.X."/>
            <person name="Lam B."/>
            <person name="Sakano H."/>
            <person name="Wu T."/>
            <person name="Yu G."/>
            <person name="Miranda M."/>
            <person name="Quach H.L."/>
            <person name="Tripp M."/>
            <person name="Chang C.H."/>
            <person name="Lee J.M."/>
            <person name="Toriumi M.J."/>
            <person name="Chan M.M."/>
            <person name="Tang C.C."/>
            <person name="Onodera C.S."/>
            <person name="Deng J.M."/>
            <person name="Akiyama K."/>
            <person name="Ansari Y."/>
            <person name="Arakawa T."/>
            <person name="Banh J."/>
            <person name="Banno F."/>
            <person name="Bowser L."/>
            <person name="Brooks S.Y."/>
            <person name="Carninci P."/>
            <person name="Chao Q."/>
            <person name="Choy N."/>
            <person name="Enju A."/>
            <person name="Goldsmith A.D."/>
            <person name="Gurjal M."/>
            <person name="Hansen N.F."/>
            <person name="Hayashizaki Y."/>
            <person name="Johnson-Hopson C."/>
            <person name="Hsuan V.W."/>
            <person name="Iida K."/>
            <person name="Karnes M."/>
            <person name="Khan S."/>
            <person name="Koesema E."/>
            <person name="Ishida J."/>
            <person name="Jiang P.X."/>
            <person name="Jones T."/>
            <person name="Kawai J."/>
            <person name="Kamiya A."/>
            <person name="Meyers C."/>
            <person name="Nakajima M."/>
            <person name="Narusaka M."/>
            <person name="Seki M."/>
            <person name="Sakurai T."/>
            <person name="Satou M."/>
            <person name="Tamse R."/>
            <person name="Vaysberg M."/>
            <person name="Wallender E.K."/>
            <person name="Wong C."/>
            <person name="Yamamura Y."/>
            <person name="Yuan S."/>
            <person name="Shinozaki K."/>
            <person name="Davis R.W."/>
            <person name="Theologis A."/>
            <person name="Ecker J.R."/>
        </authorList>
    </citation>
    <scope>NUCLEOTIDE SEQUENCE [LARGE SCALE MRNA]</scope>
    <source>
        <strain>cv. Columbia</strain>
    </source>
</reference>
<reference key="4">
    <citation type="submission" date="2002-03" db="EMBL/GenBank/DDBJ databases">
        <title>Full-length cDNA from Arabidopsis thaliana.</title>
        <authorList>
            <person name="Brover V.V."/>
            <person name="Troukhan M.E."/>
            <person name="Alexandrov N.A."/>
            <person name="Lu Y.-P."/>
            <person name="Flavell R.B."/>
            <person name="Feldmann K.A."/>
        </authorList>
    </citation>
    <scope>NUCLEOTIDE SEQUENCE [LARGE SCALE MRNA]</scope>
</reference>
<reference key="5">
    <citation type="journal article" date="2002" name="Plant Cell">
        <title>Arabidopsis E2Fc functions in cell division and is degraded by the ubiquitin-SCF(AtSKP2) pathway in response to light.</title>
        <authorList>
            <person name="del Pozo J.C."/>
            <person name="Boniotti M.B."/>
            <person name="Gutierrez C."/>
        </authorList>
    </citation>
    <scope>FUNCTION</scope>
    <scope>INTERACTION WITH CUL1 AND E2FC</scope>
</reference>
<reference key="6">
    <citation type="journal article" date="2006" name="Plant Cell">
        <title>The balance between cell division and endoreplication depends on E2FC-DPB, transcription factors regulated by the ubiquitin-SCFSKP2A pathway in Arabidopsis.</title>
        <authorList>
            <person name="del Pozo J.C."/>
            <person name="Diaz-Trivino S."/>
            <person name="Cisneros N."/>
            <person name="Gutierrez C."/>
        </authorList>
    </citation>
    <scope>FUNCTION</scope>
</reference>
<reference key="7">
    <citation type="journal article" date="2008" name="Plant J.">
        <title>SKP2A, an F-box protein that regulates cell division, is degraded via the ubiquitin pathway.</title>
        <authorList>
            <person name="Jurado S."/>
            <person name="Diaz-Trivino S."/>
            <person name="Abraham Z."/>
            <person name="Manzano C."/>
            <person name="Gutierrez C."/>
            <person name="del Pozo C."/>
        </authorList>
    </citation>
    <scope>FUNCTION</scope>
    <scope>UBIQUITINATION</scope>
    <scope>INDUCTION DURING CELL CYCLE</scope>
    <scope>DEVELOPMENTAL STAGE</scope>
    <scope>TISSUE SPECIFICITY</scope>
    <scope>INTERACTION WITH SKP1A; SKP1B AND ASK18</scope>
    <scope>SUBCELLULAR LOCATION</scope>
</reference>
<reference key="8">
    <citation type="journal article" date="2008" name="Plant Signal. Behav.">
        <title>SKP2A protein, an F-box that regulates cell division, is degraded via the ubiquitin pathway.</title>
        <authorList>
            <person name="Jurado S."/>
            <person name="Trivino S.D."/>
            <person name="Abraham Z."/>
            <person name="Manzano C."/>
            <person name="Gutierrez C."/>
            <person name="Del Pozo C."/>
        </authorList>
    </citation>
    <scope>FUNCTION</scope>
    <scope>UBIQUITINATION</scope>
    <scope>INDUCTION BY AUXIN</scope>
</reference>
<reference key="9">
    <citation type="journal article" date="2010" name="Plant Cell">
        <title>The Arabidopsis cell cycle F-Box protein SKP2A binds to auxin.</title>
        <authorList>
            <person name="Jurado S."/>
            <person name="Abraham Z."/>
            <person name="Manzano C."/>
            <person name="Lopez-Torrejon G."/>
            <person name="Pacios L.F."/>
            <person name="Del Pozo J.C."/>
        </authorList>
    </citation>
    <scope>FUNCTION</scope>
    <scope>INTERACTION WITH DPB AND AUXIN</scope>
    <scope>MUTAGENESIS OF LEU-128 AND SER-151</scope>
</reference>
<sequence>MVMGGEASMELDQCFQKMKMEGISIKEWKDIPVELLMRILSLVDDRNVIVASGVCTGWRDAISFGLTRLRLSWCNNNMNSLVLSLVPKFVKLQTLNLRQDKPQLEDNAVEAIANHCHELQELDLSKSLKITDRSLYALAHGCPDLTKLNLSGCTSFSDTAIAYLTRFCRKLKVLNLCGCVKAVTDNALEAIGNNCNQMQSLNLGWCENISDDGVMSLAYGCPDLRTLDLCGCVLITDESVVALADWCVHLRSLGLYYCRNITDRAMYSLAQSGVKNKPGSWKSVKKGKYDEEGLRSLNISQCTALTPSAVQAVCDSFPALHTCSGRHSLVMSGCLNLTTVHCACILQAHRAHNAVPHPAH</sequence>
<feature type="chain" id="PRO_0000396016" description="F-box protein SKP2A">
    <location>
        <begin position="1"/>
        <end position="360"/>
    </location>
</feature>
<feature type="domain" description="F-box">
    <location>
        <begin position="25"/>
        <end position="71"/>
    </location>
</feature>
<feature type="binding site">
    <location>
        <begin position="127"/>
        <end position="128"/>
    </location>
    <ligand>
        <name>(indol-3-yl)acetate</name>
        <dbReference type="ChEBI" id="CHEBI:30854"/>
    </ligand>
</feature>
<feature type="binding site">
    <location>
        <begin position="149"/>
        <end position="152"/>
    </location>
    <ligand>
        <name>(indol-3-yl)acetate</name>
        <dbReference type="ChEBI" id="CHEBI:30854"/>
    </ligand>
</feature>
<feature type="binding site">
    <location>
        <begin position="175"/>
        <end position="178"/>
    </location>
    <ligand>
        <name>(indol-3-yl)acetate</name>
        <dbReference type="ChEBI" id="CHEBI:30854"/>
    </ligand>
</feature>
<feature type="binding site">
    <location>
        <position position="202"/>
    </location>
    <ligand>
        <name>(indol-3-yl)acetate</name>
        <dbReference type="ChEBI" id="CHEBI:30854"/>
    </ligand>
</feature>
<feature type="mutagenesis site" description="60% reduction of auxin binding. 70% reduction of auxin binding and loss of ubiquitination-mediated degradation; when associated with A-151." evidence="6">
    <original>L</original>
    <variation>S</variation>
    <location>
        <position position="128"/>
    </location>
</feature>
<feature type="mutagenesis site" description="60% reduction of auxin binding. 70% reduction of auxin binding and loss of ubiquitination-mediated degradation; when associated with S-128." evidence="6">
    <original>S</original>
    <variation>A</variation>
    <location>
        <position position="151"/>
    </location>
</feature>
<feature type="sequence conflict" description="In Ref. 4; AAM63110." evidence="7" ref="4">
    <original>M</original>
    <variation>I</variation>
    <location>
        <position position="266"/>
    </location>
</feature>
<feature type="sequence conflict" description="In Ref. 4; AAM63110." evidence="7" ref="4">
    <original>P</original>
    <variation>S</variation>
    <location>
        <position position="307"/>
    </location>
</feature>
<evidence type="ECO:0000250" key="1"/>
<evidence type="ECO:0000269" key="2">
    <source>
    </source>
</evidence>
<evidence type="ECO:0000269" key="3">
    <source>
    </source>
</evidence>
<evidence type="ECO:0000269" key="4">
    <source>
    </source>
</evidence>
<evidence type="ECO:0000269" key="5">
    <source>
    </source>
</evidence>
<evidence type="ECO:0000269" key="6">
    <source>
    </source>
</evidence>
<evidence type="ECO:0000305" key="7"/>
<proteinExistence type="evidence at protein level"/>
<comment type="function">
    <text evidence="2 3 4 5 6">Component of SCF(SKP2A) E3 ubiquitin ligase complexes, which mediate the ubiquitination and subsequent proteasomal degradation of target proteins (including cell cycle repressors). Acts as an auxin receptor; one active auxin is indole-3-acetate. Regulates the stability of the transcription factors E2FC and DPB, repressors of cell proliferation. Confers increase tolerance to osmotic stress by promoting cell division, especially in meristems. Promotes the formation of lateral root primordia.</text>
</comment>
<comment type="pathway">
    <text>Protein modification; protein ubiquitination.</text>
</comment>
<comment type="subunit">
    <text evidence="2 4 6">Part of a SCF (ASK-cullin-F-box) protein ligase complex. Interacts with CUL1 (RUB1-modified and non-modified isoforms), SKP1A, SKP1B and ASK18. Recruit DPB and phosphorylated E2FC. Interacts with auxin. Auxin controls the interaction with DPB.</text>
</comment>
<comment type="subcellular location">
    <subcellularLocation>
        <location evidence="4">Nucleus</location>
    </subcellularLocation>
</comment>
<comment type="tissue specificity">
    <text evidence="4">Expressed in embryo, seedlings, hypocotyl, roots, leaves and flowers.</text>
</comment>
<comment type="developmental stage">
    <text evidence="4">Widely expressed during the first stages of germination. In seedling, more intense in dividing areas, such as meristems and young organs. In leaves, confined to vascular tissue and stomatal cells. In roots, detected in tips, vascular cylinder of the distal part, and in lateral roots emerging primordia. Low levels in specific cells of root meristems.</text>
</comment>
<comment type="induction">
    <text evidence="4 5">Cell-cycle regulated expression with higher levels during early S-phase and G2/M stages. Repressed by auxin through a ubiquitin-dependent pathway (at protein level). Only biologically active auxin promotes proteolysis of SKP2A.</text>
</comment>
<comment type="domain">
    <text evidence="1">The F-box is necessary for the interaction with ASK proteins.</text>
</comment>
<comment type="PTM">
    <text evidence="4 5">Polyubiquitinated and subsequently targeted to proteasome. Auxin promotes this ubiquitination-mediated degradation.</text>
</comment>
<accession>Q9LPL4</accession>
<accession>Q8LDN3</accession>
<organism>
    <name type="scientific">Arabidopsis thaliana</name>
    <name type="common">Mouse-ear cress</name>
    <dbReference type="NCBI Taxonomy" id="3702"/>
    <lineage>
        <taxon>Eukaryota</taxon>
        <taxon>Viridiplantae</taxon>
        <taxon>Streptophyta</taxon>
        <taxon>Embryophyta</taxon>
        <taxon>Tracheophyta</taxon>
        <taxon>Spermatophyta</taxon>
        <taxon>Magnoliopsida</taxon>
        <taxon>eudicotyledons</taxon>
        <taxon>Gunneridae</taxon>
        <taxon>Pentapetalae</taxon>
        <taxon>rosids</taxon>
        <taxon>malvids</taxon>
        <taxon>Brassicales</taxon>
        <taxon>Brassicaceae</taxon>
        <taxon>Camelineae</taxon>
        <taxon>Arabidopsis</taxon>
    </lineage>
</organism>
<name>SKP2A_ARATH</name>
<gene>
    <name type="primary">SKP2A</name>
    <name type="ordered locus">At1g21410</name>
    <name type="ORF">F24J8.5</name>
</gene>
<keyword id="KW-0927">Auxin signaling pathway</keyword>
<keyword id="KW-0449">Lipoprotein</keyword>
<keyword id="KW-0519">Myristate</keyword>
<keyword id="KW-0539">Nucleus</keyword>
<keyword id="KW-1185">Reference proteome</keyword>
<keyword id="KW-0832">Ubl conjugation</keyword>
<keyword id="KW-0833">Ubl conjugation pathway</keyword>